<organism>
    <name type="scientific">Chlamydia caviae (strain ATCC VR-813 / DSM 19441 / 03DC25 / GPIC)</name>
    <name type="common">Chlamydophila caviae</name>
    <dbReference type="NCBI Taxonomy" id="227941"/>
    <lineage>
        <taxon>Bacteria</taxon>
        <taxon>Pseudomonadati</taxon>
        <taxon>Chlamydiota</taxon>
        <taxon>Chlamydiia</taxon>
        <taxon>Chlamydiales</taxon>
        <taxon>Chlamydiaceae</taxon>
        <taxon>Chlamydia/Chlamydophila group</taxon>
        <taxon>Chlamydia</taxon>
    </lineage>
</organism>
<proteinExistence type="inferred from homology"/>
<accession>Q821M8</accession>
<feature type="chain" id="PRO_0000137941" description="Glycerol-3-phosphate dehydrogenase [NAD(P)+]">
    <location>
        <begin position="1"/>
        <end position="334"/>
    </location>
</feature>
<feature type="active site" description="Proton acceptor" evidence="1">
    <location>
        <position position="192"/>
    </location>
</feature>
<feature type="binding site" evidence="1">
    <location>
        <position position="13"/>
    </location>
    <ligand>
        <name>NADPH</name>
        <dbReference type="ChEBI" id="CHEBI:57783"/>
    </ligand>
</feature>
<feature type="binding site" evidence="1">
    <location>
        <position position="33"/>
    </location>
    <ligand>
        <name>NADPH</name>
        <dbReference type="ChEBI" id="CHEBI:57783"/>
    </ligand>
</feature>
<feature type="binding site" evidence="1">
    <location>
        <position position="106"/>
    </location>
    <ligand>
        <name>NADPH</name>
        <dbReference type="ChEBI" id="CHEBI:57783"/>
    </ligand>
</feature>
<feature type="binding site" evidence="1">
    <location>
        <position position="106"/>
    </location>
    <ligand>
        <name>sn-glycerol 3-phosphate</name>
        <dbReference type="ChEBI" id="CHEBI:57597"/>
    </ligand>
</feature>
<feature type="binding site" evidence="1">
    <location>
        <position position="137"/>
    </location>
    <ligand>
        <name>sn-glycerol 3-phosphate</name>
        <dbReference type="ChEBI" id="CHEBI:57597"/>
    </ligand>
</feature>
<feature type="binding site" evidence="1">
    <location>
        <position position="139"/>
    </location>
    <ligand>
        <name>sn-glycerol 3-phosphate</name>
        <dbReference type="ChEBI" id="CHEBI:57597"/>
    </ligand>
</feature>
<feature type="binding site" evidence="1">
    <location>
        <position position="141"/>
    </location>
    <ligand>
        <name>NADPH</name>
        <dbReference type="ChEBI" id="CHEBI:57783"/>
    </ligand>
</feature>
<feature type="binding site" evidence="1">
    <location>
        <position position="192"/>
    </location>
    <ligand>
        <name>sn-glycerol 3-phosphate</name>
        <dbReference type="ChEBI" id="CHEBI:57597"/>
    </ligand>
</feature>
<feature type="binding site" evidence="1">
    <location>
        <position position="245"/>
    </location>
    <ligand>
        <name>sn-glycerol 3-phosphate</name>
        <dbReference type="ChEBI" id="CHEBI:57597"/>
    </ligand>
</feature>
<feature type="binding site" evidence="1">
    <location>
        <position position="255"/>
    </location>
    <ligand>
        <name>sn-glycerol 3-phosphate</name>
        <dbReference type="ChEBI" id="CHEBI:57597"/>
    </ligand>
</feature>
<feature type="binding site" evidence="1">
    <location>
        <position position="256"/>
    </location>
    <ligand>
        <name>NADPH</name>
        <dbReference type="ChEBI" id="CHEBI:57783"/>
    </ligand>
</feature>
<feature type="binding site" evidence="1">
    <location>
        <position position="256"/>
    </location>
    <ligand>
        <name>sn-glycerol 3-phosphate</name>
        <dbReference type="ChEBI" id="CHEBI:57597"/>
    </ligand>
</feature>
<feature type="binding site" evidence="1">
    <location>
        <position position="257"/>
    </location>
    <ligand>
        <name>sn-glycerol 3-phosphate</name>
        <dbReference type="ChEBI" id="CHEBI:57597"/>
    </ligand>
</feature>
<feature type="binding site" evidence="1">
    <location>
        <position position="280"/>
    </location>
    <ligand>
        <name>NADPH</name>
        <dbReference type="ChEBI" id="CHEBI:57783"/>
    </ligand>
</feature>
<feature type="binding site" evidence="1">
    <location>
        <position position="282"/>
    </location>
    <ligand>
        <name>NADPH</name>
        <dbReference type="ChEBI" id="CHEBI:57783"/>
    </ligand>
</feature>
<dbReference type="EC" id="1.1.1.94" evidence="1"/>
<dbReference type="EMBL" id="AE015925">
    <property type="protein sequence ID" value="AAP05651.1"/>
    <property type="molecule type" value="Genomic_DNA"/>
</dbReference>
<dbReference type="RefSeq" id="WP_011006865.1">
    <property type="nucleotide sequence ID" value="NC_003361.3"/>
</dbReference>
<dbReference type="SMR" id="Q821M8"/>
<dbReference type="STRING" id="227941.CCA_00912"/>
<dbReference type="KEGG" id="cca:CCA_00912"/>
<dbReference type="eggNOG" id="COG0240">
    <property type="taxonomic scope" value="Bacteria"/>
</dbReference>
<dbReference type="HOGENOM" id="CLU_033449_0_2_0"/>
<dbReference type="OrthoDB" id="9812273at2"/>
<dbReference type="UniPathway" id="UPA00940"/>
<dbReference type="Proteomes" id="UP000002193">
    <property type="component" value="Chromosome"/>
</dbReference>
<dbReference type="GO" id="GO:0005829">
    <property type="term" value="C:cytosol"/>
    <property type="evidence" value="ECO:0007669"/>
    <property type="project" value="TreeGrafter"/>
</dbReference>
<dbReference type="GO" id="GO:0047952">
    <property type="term" value="F:glycerol-3-phosphate dehydrogenase [NAD(P)+] activity"/>
    <property type="evidence" value="ECO:0007669"/>
    <property type="project" value="UniProtKB-UniRule"/>
</dbReference>
<dbReference type="GO" id="GO:0051287">
    <property type="term" value="F:NAD binding"/>
    <property type="evidence" value="ECO:0007669"/>
    <property type="project" value="InterPro"/>
</dbReference>
<dbReference type="GO" id="GO:0005975">
    <property type="term" value="P:carbohydrate metabolic process"/>
    <property type="evidence" value="ECO:0007669"/>
    <property type="project" value="InterPro"/>
</dbReference>
<dbReference type="GO" id="GO:0046167">
    <property type="term" value="P:glycerol-3-phosphate biosynthetic process"/>
    <property type="evidence" value="ECO:0007669"/>
    <property type="project" value="UniProtKB-UniRule"/>
</dbReference>
<dbReference type="GO" id="GO:0046168">
    <property type="term" value="P:glycerol-3-phosphate catabolic process"/>
    <property type="evidence" value="ECO:0007669"/>
    <property type="project" value="InterPro"/>
</dbReference>
<dbReference type="GO" id="GO:0006650">
    <property type="term" value="P:glycerophospholipid metabolic process"/>
    <property type="evidence" value="ECO:0007669"/>
    <property type="project" value="UniProtKB-UniRule"/>
</dbReference>
<dbReference type="GO" id="GO:0008654">
    <property type="term" value="P:phospholipid biosynthetic process"/>
    <property type="evidence" value="ECO:0007669"/>
    <property type="project" value="UniProtKB-KW"/>
</dbReference>
<dbReference type="FunFam" id="1.10.1040.10:FF:000001">
    <property type="entry name" value="Glycerol-3-phosphate dehydrogenase [NAD(P)+]"/>
    <property type="match status" value="1"/>
</dbReference>
<dbReference type="Gene3D" id="1.10.1040.10">
    <property type="entry name" value="N-(1-d-carboxylethyl)-l-norvaline Dehydrogenase, domain 2"/>
    <property type="match status" value="1"/>
</dbReference>
<dbReference type="Gene3D" id="3.40.50.720">
    <property type="entry name" value="NAD(P)-binding Rossmann-like Domain"/>
    <property type="match status" value="1"/>
</dbReference>
<dbReference type="HAMAP" id="MF_00394">
    <property type="entry name" value="NAD_Glyc3P_dehydrog"/>
    <property type="match status" value="1"/>
</dbReference>
<dbReference type="InterPro" id="IPR008927">
    <property type="entry name" value="6-PGluconate_DH-like_C_sf"/>
</dbReference>
<dbReference type="InterPro" id="IPR013328">
    <property type="entry name" value="6PGD_dom2"/>
</dbReference>
<dbReference type="InterPro" id="IPR006168">
    <property type="entry name" value="G3P_DH_NAD-dep"/>
</dbReference>
<dbReference type="InterPro" id="IPR006109">
    <property type="entry name" value="G3P_DH_NAD-dep_C"/>
</dbReference>
<dbReference type="InterPro" id="IPR011128">
    <property type="entry name" value="G3P_DH_NAD-dep_N"/>
</dbReference>
<dbReference type="InterPro" id="IPR036291">
    <property type="entry name" value="NAD(P)-bd_dom_sf"/>
</dbReference>
<dbReference type="NCBIfam" id="NF000940">
    <property type="entry name" value="PRK00094.1-2"/>
    <property type="match status" value="1"/>
</dbReference>
<dbReference type="NCBIfam" id="NF000942">
    <property type="entry name" value="PRK00094.1-4"/>
    <property type="match status" value="1"/>
</dbReference>
<dbReference type="PANTHER" id="PTHR11728">
    <property type="entry name" value="GLYCEROL-3-PHOSPHATE DEHYDROGENASE"/>
    <property type="match status" value="1"/>
</dbReference>
<dbReference type="PANTHER" id="PTHR11728:SF1">
    <property type="entry name" value="GLYCEROL-3-PHOSPHATE DEHYDROGENASE [NAD(+)] 2, CHLOROPLASTIC"/>
    <property type="match status" value="1"/>
</dbReference>
<dbReference type="Pfam" id="PF07479">
    <property type="entry name" value="NAD_Gly3P_dh_C"/>
    <property type="match status" value="1"/>
</dbReference>
<dbReference type="Pfam" id="PF01210">
    <property type="entry name" value="NAD_Gly3P_dh_N"/>
    <property type="match status" value="1"/>
</dbReference>
<dbReference type="PIRSF" id="PIRSF000114">
    <property type="entry name" value="Glycerol-3-P_dh"/>
    <property type="match status" value="1"/>
</dbReference>
<dbReference type="PRINTS" id="PR00077">
    <property type="entry name" value="GPDHDRGNASE"/>
</dbReference>
<dbReference type="SUPFAM" id="SSF48179">
    <property type="entry name" value="6-phosphogluconate dehydrogenase C-terminal domain-like"/>
    <property type="match status" value="1"/>
</dbReference>
<dbReference type="SUPFAM" id="SSF51735">
    <property type="entry name" value="NAD(P)-binding Rossmann-fold domains"/>
    <property type="match status" value="1"/>
</dbReference>
<dbReference type="PROSITE" id="PS00957">
    <property type="entry name" value="NAD_G3PDH"/>
    <property type="match status" value="1"/>
</dbReference>
<keyword id="KW-0963">Cytoplasm</keyword>
<keyword id="KW-0444">Lipid biosynthesis</keyword>
<keyword id="KW-0443">Lipid metabolism</keyword>
<keyword id="KW-0520">NAD</keyword>
<keyword id="KW-0521">NADP</keyword>
<keyword id="KW-0547">Nucleotide-binding</keyword>
<keyword id="KW-0560">Oxidoreductase</keyword>
<keyword id="KW-0594">Phospholipid biosynthesis</keyword>
<keyword id="KW-1208">Phospholipid metabolism</keyword>
<comment type="function">
    <text evidence="1">Catalyzes the reduction of the glycolytic intermediate dihydroxyacetone phosphate (DHAP) to sn-glycerol 3-phosphate (G3P), the key precursor for phospholipid synthesis.</text>
</comment>
<comment type="catalytic activity">
    <reaction evidence="1">
        <text>sn-glycerol 3-phosphate + NAD(+) = dihydroxyacetone phosphate + NADH + H(+)</text>
        <dbReference type="Rhea" id="RHEA:11092"/>
        <dbReference type="ChEBI" id="CHEBI:15378"/>
        <dbReference type="ChEBI" id="CHEBI:57540"/>
        <dbReference type="ChEBI" id="CHEBI:57597"/>
        <dbReference type="ChEBI" id="CHEBI:57642"/>
        <dbReference type="ChEBI" id="CHEBI:57945"/>
        <dbReference type="EC" id="1.1.1.94"/>
    </reaction>
    <physiologicalReaction direction="right-to-left" evidence="1">
        <dbReference type="Rhea" id="RHEA:11094"/>
    </physiologicalReaction>
</comment>
<comment type="catalytic activity">
    <reaction evidence="1">
        <text>sn-glycerol 3-phosphate + NADP(+) = dihydroxyacetone phosphate + NADPH + H(+)</text>
        <dbReference type="Rhea" id="RHEA:11096"/>
        <dbReference type="ChEBI" id="CHEBI:15378"/>
        <dbReference type="ChEBI" id="CHEBI:57597"/>
        <dbReference type="ChEBI" id="CHEBI:57642"/>
        <dbReference type="ChEBI" id="CHEBI:57783"/>
        <dbReference type="ChEBI" id="CHEBI:58349"/>
        <dbReference type="EC" id="1.1.1.94"/>
    </reaction>
    <physiologicalReaction direction="right-to-left" evidence="1">
        <dbReference type="Rhea" id="RHEA:11098"/>
    </physiologicalReaction>
</comment>
<comment type="pathway">
    <text evidence="1">Membrane lipid metabolism; glycerophospholipid metabolism.</text>
</comment>
<comment type="subcellular location">
    <subcellularLocation>
        <location evidence="1">Cytoplasm</location>
    </subcellularLocation>
</comment>
<comment type="similarity">
    <text evidence="1">Belongs to the NAD-dependent glycerol-3-phosphate dehydrogenase family.</text>
</comment>
<gene>
    <name evidence="1" type="primary">gpsA</name>
    <name type="ordered locus">CCA_00912</name>
</gene>
<protein>
    <recommendedName>
        <fullName evidence="1">Glycerol-3-phosphate dehydrogenase [NAD(P)+]</fullName>
        <ecNumber evidence="1">1.1.1.94</ecNumber>
    </recommendedName>
    <alternativeName>
        <fullName evidence="1">NAD(P)(+)-dependent glycerol-3-phosphate dehydrogenase</fullName>
    </alternativeName>
    <alternativeName>
        <fullName evidence="1">NAD(P)H-dependent dihydroxyacetone-phosphate reductase</fullName>
    </alternativeName>
</protein>
<name>GPDA_CHLCV</name>
<evidence type="ECO:0000255" key="1">
    <source>
        <dbReference type="HAMAP-Rule" id="MF_00394"/>
    </source>
</evidence>
<sequence>MKEKIAYLGMGIWGFCLASLLANKGYHVVGWARNAELIAQLQTEKRHPQVPDVPIHPNLSFTTDMAEAVENASMIVEGVSSAGIRPVSEQLKTITNLNVPFVITSKGIEQHTGLLLSEIVVEIFGNDASQYLGYLSGPSIAREVLKGCPCSVVISAYNPDTLKKIHNAFLTPTFRVYPNSDLKGVALGGALKNIIAIACGISDGFRFGDNAKSGLVTRGLHEIRKFATIMNCRPDTLNGLAGLGDLCTTCFSSLSRNTKFGKLIAQGMTVAQAKAEIGMVVEGVYTALSAYQIAKHHKIDMPITTGIYRVLYENLDIQEGIAALLQRNTKEEYL</sequence>
<reference key="1">
    <citation type="journal article" date="2003" name="Nucleic Acids Res.">
        <title>Genome sequence of Chlamydophila caviae (Chlamydia psittaci GPIC): examining the role of niche-specific genes in the evolution of the Chlamydiaceae.</title>
        <authorList>
            <person name="Read T.D."/>
            <person name="Myers G.S.A."/>
            <person name="Brunham R.C."/>
            <person name="Nelson W.C."/>
            <person name="Paulsen I.T."/>
            <person name="Heidelberg J.F."/>
            <person name="Holtzapple E.K."/>
            <person name="Khouri H.M."/>
            <person name="Federova N.B."/>
            <person name="Carty H.A."/>
            <person name="Umayam L.A."/>
            <person name="Haft D.H."/>
            <person name="Peterson J.D."/>
            <person name="Beanan M.J."/>
            <person name="White O."/>
            <person name="Salzberg S.L."/>
            <person name="Hsia R.-C."/>
            <person name="McClarty G."/>
            <person name="Rank R.G."/>
            <person name="Bavoil P.M."/>
            <person name="Fraser C.M."/>
        </authorList>
    </citation>
    <scope>NUCLEOTIDE SEQUENCE [LARGE SCALE GENOMIC DNA]</scope>
    <source>
        <strain>ATCC VR-813 / DSM 19441 / 03DC25 / GPIC</strain>
    </source>
</reference>